<feature type="chain" id="PRO_0000082687" description="Ras-related protein Rap-2a">
    <location>
        <begin position="1"/>
        <end position="180"/>
    </location>
</feature>
<feature type="propeptide" id="PRO_0000281336" description="Removed in mature form" evidence="23">
    <location>
        <begin position="181"/>
        <end position="183"/>
    </location>
</feature>
<feature type="short sequence motif" description="Effector region" evidence="22">
    <location>
        <begin position="32"/>
        <end position="40"/>
    </location>
</feature>
<feature type="binding site" evidence="1">
    <location>
        <begin position="10"/>
        <end position="17"/>
    </location>
    <ligand>
        <name>GTP</name>
        <dbReference type="ChEBI" id="CHEBI:37565"/>
    </ligand>
</feature>
<feature type="binding site" evidence="1">
    <location>
        <begin position="57"/>
        <end position="61"/>
    </location>
    <ligand>
        <name>GTP</name>
        <dbReference type="ChEBI" id="CHEBI:37565"/>
    </ligand>
</feature>
<feature type="binding site" evidence="1">
    <location>
        <begin position="116"/>
        <end position="119"/>
    </location>
    <ligand>
        <name>GTP</name>
        <dbReference type="ChEBI" id="CHEBI:37565"/>
    </ligand>
</feature>
<feature type="modified residue" description="Cysteine methyl ester" evidence="23">
    <location>
        <position position="180"/>
    </location>
</feature>
<feature type="lipid moiety-binding region" description="S-palmitoyl cysteine" evidence="2">
    <location>
        <position position="176"/>
    </location>
</feature>
<feature type="lipid moiety-binding region" description="S-palmitoyl cysteine" evidence="2">
    <location>
        <position position="177"/>
    </location>
</feature>
<feature type="lipid moiety-binding region" description="S-farnesyl cysteine" evidence="20">
    <location>
        <position position="180"/>
    </location>
</feature>
<feature type="glycosylation site" description="(Microbial infection) O-linked (Glc) threonine; by C.difficile toxin TcdA, and by P.sordellii toxin TcsL" evidence="15 21">
    <location>
        <position position="35"/>
    </location>
</feature>
<feature type="mutagenesis site" description="Reduced NEDD4-dependent ubiquitination; when associated with R-94; R-148 and R-150." evidence="14">
    <original>K</original>
    <variation>R</variation>
    <location>
        <position position="5"/>
    </location>
</feature>
<feature type="mutagenesis site" description="Dominant active (GTP-bound mutant). 2-fold decrease in GDP dissociation rate constant and GTPase activity. No change in interaction with TNIK. No change in endosomal trafficking." evidence="6 12 17">
    <original>G</original>
    <variation>V</variation>
    <location>
        <position position="12"/>
    </location>
</feature>
<feature type="mutagenesis site" description="Dominant negative (GDP-bound mutant). Severely impairs GTP-binding and partial loss of interaction with MAP4K4, MINK1 and TNIK. Decreased localization to the plasma membrane; increaded localization to lysosomes and late endosomes." evidence="6 12 17">
    <original>S</original>
    <variation>N</variation>
    <location>
        <position position="17"/>
    </location>
</feature>
<feature type="mutagenesis site" description="Decreases affinity for GTP and 3-fold reduction of GTPase activity." evidence="12">
    <original>T</original>
    <variation>A</variation>
    <location>
        <position position="35"/>
    </location>
</feature>
<feature type="mutagenesis site" description="Loss of RASGEF1A- and RASGEF1B-mediated GDP to GTP exchange. Complete loss of interaction with MAP4K4, MINK1 and TNIK, and loss of ubiquitination by NEDD4." evidence="6 13 14">
    <original>F</original>
    <variation>S</variation>
    <location>
        <position position="39"/>
    </location>
</feature>
<feature type="mutagenesis site" description="Reduced NEDD4-dependent ubiquitination; when associated with R-5; R-148 and R-150." evidence="14">
    <original>K</original>
    <variation>R</variation>
    <location>
        <position position="94"/>
    </location>
</feature>
<feature type="mutagenesis site" description="Increased binding to RAB40C; when associated with R-148 and R-150. Increased localization within endolysosomes; when associated with R-148 and R-150. Decreased cell invasion; when associated with R-148 and R-150." evidence="17">
    <original>K</original>
    <variation>R</variation>
    <location>
        <position position="117"/>
    </location>
</feature>
<feature type="mutagenesis site" description="Imperfect binding of guanyl nucleotides." evidence="12">
    <original>T</original>
    <variation>I</variation>
    <location>
        <position position="145"/>
    </location>
</feature>
<feature type="mutagenesis site" description="Reduced NEDD4-dependent ubiquitination; when associated with R-5; R-94 and R-150. Increased binding to RAB40C; when associated with R-117 and R-150. Increased localization within endolysosomes; when associated with R-117 and R-150. Decreased cell invasion; when associated with R-117 and R-150." evidence="14 17">
    <original>K</original>
    <variation>R</variation>
    <location>
        <position position="148"/>
    </location>
</feature>
<feature type="mutagenesis site" description="Reduced NEDD4-dependent ubiquitination; when associated with R-5; R-94 and R-148. Increased binding to RAB40C; when associated with R-117 and R-148. Increased localization within endolysosomes; when associated with R-117 and R-148. Decreased cell invasion; when associated with R-117 and R-148." evidence="14 17">
    <original>K</original>
    <variation>R</variation>
    <location>
        <position position="150"/>
    </location>
</feature>
<feature type="strand" evidence="25">
    <location>
        <begin position="3"/>
        <end position="9"/>
    </location>
</feature>
<feature type="helix" evidence="25">
    <location>
        <begin position="16"/>
        <end position="25"/>
    </location>
</feature>
<feature type="strand" evidence="25">
    <location>
        <begin position="38"/>
        <end position="46"/>
    </location>
</feature>
<feature type="strand" evidence="25">
    <location>
        <begin position="49"/>
        <end position="57"/>
    </location>
</feature>
<feature type="helix" evidence="25">
    <location>
        <begin position="65"/>
        <end position="74"/>
    </location>
</feature>
<feature type="strand" evidence="25">
    <location>
        <begin position="76"/>
        <end position="83"/>
    </location>
</feature>
<feature type="helix" evidence="25">
    <location>
        <begin position="87"/>
        <end position="103"/>
    </location>
</feature>
<feature type="turn" evidence="25">
    <location>
        <begin position="104"/>
        <end position="106"/>
    </location>
</feature>
<feature type="strand" evidence="25">
    <location>
        <begin position="111"/>
        <end position="116"/>
    </location>
</feature>
<feature type="helix" evidence="25">
    <location>
        <begin position="118"/>
        <end position="123"/>
    </location>
</feature>
<feature type="helix" evidence="25">
    <location>
        <begin position="128"/>
        <end position="138"/>
    </location>
</feature>
<feature type="strand" evidence="25">
    <location>
        <begin position="142"/>
        <end position="145"/>
    </location>
</feature>
<feature type="helix" evidence="25">
    <location>
        <begin position="150"/>
        <end position="166"/>
    </location>
</feature>
<reference key="1">
    <citation type="journal article" date="1988" name="Oncogene">
        <title>Human cDNAs rap1 and rap2 homologous to the Drosophila gene Dras3 encode proteins closely related to ras in the 'effector' region.</title>
        <authorList>
            <person name="Pizon V."/>
            <person name="Chardin P."/>
            <person name="Lerosey I."/>
            <person name="Olofsson B."/>
            <person name="Tavitian A."/>
        </authorList>
    </citation>
    <scope>NUCLEOTIDE SEQUENCE [MRNA]</scope>
</reference>
<reference key="2">
    <citation type="submission" date="1999-11" db="EMBL/GenBank/DDBJ databases">
        <title>A novel new gene associated with pRb.</title>
        <authorList>
            <person name="Fan Z.S."/>
            <person name="Ao S.Z."/>
        </authorList>
    </citation>
    <scope>NUCLEOTIDE SEQUENCE [MRNA]</scope>
    <source>
        <tissue>Lymph node</tissue>
    </source>
</reference>
<reference key="3">
    <citation type="submission" date="2002-03" db="EMBL/GenBank/DDBJ databases">
        <title>cDNA clones of human proteins involved in signal transduction sequenced by the Guthrie cDNA resource center (www.cdna.org).</title>
        <authorList>
            <person name="Puhl H.L. III"/>
            <person name="Ikeda S.R."/>
            <person name="Aronstam R.S."/>
        </authorList>
    </citation>
    <scope>NUCLEOTIDE SEQUENCE [LARGE SCALE MRNA]</scope>
</reference>
<reference key="4">
    <citation type="journal article" date="2004" name="Nat. Genet.">
        <title>Complete sequencing and characterization of 21,243 full-length human cDNAs.</title>
        <authorList>
            <person name="Ota T."/>
            <person name="Suzuki Y."/>
            <person name="Nishikawa T."/>
            <person name="Otsuki T."/>
            <person name="Sugiyama T."/>
            <person name="Irie R."/>
            <person name="Wakamatsu A."/>
            <person name="Hayashi K."/>
            <person name="Sato H."/>
            <person name="Nagai K."/>
            <person name="Kimura K."/>
            <person name="Makita H."/>
            <person name="Sekine M."/>
            <person name="Obayashi M."/>
            <person name="Nishi T."/>
            <person name="Shibahara T."/>
            <person name="Tanaka T."/>
            <person name="Ishii S."/>
            <person name="Yamamoto J."/>
            <person name="Saito K."/>
            <person name="Kawai Y."/>
            <person name="Isono Y."/>
            <person name="Nakamura Y."/>
            <person name="Nagahari K."/>
            <person name="Murakami K."/>
            <person name="Yasuda T."/>
            <person name="Iwayanagi T."/>
            <person name="Wagatsuma M."/>
            <person name="Shiratori A."/>
            <person name="Sudo H."/>
            <person name="Hosoiri T."/>
            <person name="Kaku Y."/>
            <person name="Kodaira H."/>
            <person name="Kondo H."/>
            <person name="Sugawara M."/>
            <person name="Takahashi M."/>
            <person name="Kanda K."/>
            <person name="Yokoi T."/>
            <person name="Furuya T."/>
            <person name="Kikkawa E."/>
            <person name="Omura Y."/>
            <person name="Abe K."/>
            <person name="Kamihara K."/>
            <person name="Katsuta N."/>
            <person name="Sato K."/>
            <person name="Tanikawa M."/>
            <person name="Yamazaki M."/>
            <person name="Ninomiya K."/>
            <person name="Ishibashi T."/>
            <person name="Yamashita H."/>
            <person name="Murakawa K."/>
            <person name="Fujimori K."/>
            <person name="Tanai H."/>
            <person name="Kimata M."/>
            <person name="Watanabe M."/>
            <person name="Hiraoka S."/>
            <person name="Chiba Y."/>
            <person name="Ishida S."/>
            <person name="Ono Y."/>
            <person name="Takiguchi S."/>
            <person name="Watanabe S."/>
            <person name="Yosida M."/>
            <person name="Hotuta T."/>
            <person name="Kusano J."/>
            <person name="Kanehori K."/>
            <person name="Takahashi-Fujii A."/>
            <person name="Hara H."/>
            <person name="Tanase T.-O."/>
            <person name="Nomura Y."/>
            <person name="Togiya S."/>
            <person name="Komai F."/>
            <person name="Hara R."/>
            <person name="Takeuchi K."/>
            <person name="Arita M."/>
            <person name="Imose N."/>
            <person name="Musashino K."/>
            <person name="Yuuki H."/>
            <person name="Oshima A."/>
            <person name="Sasaki N."/>
            <person name="Aotsuka S."/>
            <person name="Yoshikawa Y."/>
            <person name="Matsunawa H."/>
            <person name="Ichihara T."/>
            <person name="Shiohata N."/>
            <person name="Sano S."/>
            <person name="Moriya S."/>
            <person name="Momiyama H."/>
            <person name="Satoh N."/>
            <person name="Takami S."/>
            <person name="Terashima Y."/>
            <person name="Suzuki O."/>
            <person name="Nakagawa S."/>
            <person name="Senoh A."/>
            <person name="Mizoguchi H."/>
            <person name="Goto Y."/>
            <person name="Shimizu F."/>
            <person name="Wakebe H."/>
            <person name="Hishigaki H."/>
            <person name="Watanabe T."/>
            <person name="Sugiyama A."/>
            <person name="Takemoto M."/>
            <person name="Kawakami B."/>
            <person name="Yamazaki M."/>
            <person name="Watanabe K."/>
            <person name="Kumagai A."/>
            <person name="Itakura S."/>
            <person name="Fukuzumi Y."/>
            <person name="Fujimori Y."/>
            <person name="Komiyama M."/>
            <person name="Tashiro H."/>
            <person name="Tanigami A."/>
            <person name="Fujiwara T."/>
            <person name="Ono T."/>
            <person name="Yamada K."/>
            <person name="Fujii Y."/>
            <person name="Ozaki K."/>
            <person name="Hirao M."/>
            <person name="Ohmori Y."/>
            <person name="Kawabata A."/>
            <person name="Hikiji T."/>
            <person name="Kobatake N."/>
            <person name="Inagaki H."/>
            <person name="Ikema Y."/>
            <person name="Okamoto S."/>
            <person name="Okitani R."/>
            <person name="Kawakami T."/>
            <person name="Noguchi S."/>
            <person name="Itoh T."/>
            <person name="Shigeta K."/>
            <person name="Senba T."/>
            <person name="Matsumura K."/>
            <person name="Nakajima Y."/>
            <person name="Mizuno T."/>
            <person name="Morinaga M."/>
            <person name="Sasaki M."/>
            <person name="Togashi T."/>
            <person name="Oyama M."/>
            <person name="Hata H."/>
            <person name="Watanabe M."/>
            <person name="Komatsu T."/>
            <person name="Mizushima-Sugano J."/>
            <person name="Satoh T."/>
            <person name="Shirai Y."/>
            <person name="Takahashi Y."/>
            <person name="Nakagawa K."/>
            <person name="Okumura K."/>
            <person name="Nagase T."/>
            <person name="Nomura N."/>
            <person name="Kikuchi H."/>
            <person name="Masuho Y."/>
            <person name="Yamashita R."/>
            <person name="Nakai K."/>
            <person name="Yada T."/>
            <person name="Nakamura Y."/>
            <person name="Ohara O."/>
            <person name="Isogai T."/>
            <person name="Sugano S."/>
        </authorList>
    </citation>
    <scope>NUCLEOTIDE SEQUENCE [LARGE SCALE MRNA]</scope>
    <source>
        <tissue>Amygdala</tissue>
    </source>
</reference>
<reference key="5">
    <citation type="journal article" date="2004" name="Nature">
        <title>The DNA sequence and analysis of human chromosome 13.</title>
        <authorList>
            <person name="Dunham A."/>
            <person name="Matthews L.H."/>
            <person name="Burton J."/>
            <person name="Ashurst J.L."/>
            <person name="Howe K.L."/>
            <person name="Ashcroft K.J."/>
            <person name="Beare D.M."/>
            <person name="Burford D.C."/>
            <person name="Hunt S.E."/>
            <person name="Griffiths-Jones S."/>
            <person name="Jones M.C."/>
            <person name="Keenan S.J."/>
            <person name="Oliver K."/>
            <person name="Scott C.E."/>
            <person name="Ainscough R."/>
            <person name="Almeida J.P."/>
            <person name="Ambrose K.D."/>
            <person name="Andrews D.T."/>
            <person name="Ashwell R.I.S."/>
            <person name="Babbage A.K."/>
            <person name="Bagguley C.L."/>
            <person name="Bailey J."/>
            <person name="Bannerjee R."/>
            <person name="Barlow K.F."/>
            <person name="Bates K."/>
            <person name="Beasley H."/>
            <person name="Bird C.P."/>
            <person name="Bray-Allen S."/>
            <person name="Brown A.J."/>
            <person name="Brown J.Y."/>
            <person name="Burrill W."/>
            <person name="Carder C."/>
            <person name="Carter N.P."/>
            <person name="Chapman J.C."/>
            <person name="Clamp M.E."/>
            <person name="Clark S.Y."/>
            <person name="Clarke G."/>
            <person name="Clee C.M."/>
            <person name="Clegg S.C."/>
            <person name="Cobley V."/>
            <person name="Collins J.E."/>
            <person name="Corby N."/>
            <person name="Coville G.J."/>
            <person name="Deloukas P."/>
            <person name="Dhami P."/>
            <person name="Dunham I."/>
            <person name="Dunn M."/>
            <person name="Earthrowl M.E."/>
            <person name="Ellington A.G."/>
            <person name="Faulkner L."/>
            <person name="Frankish A.G."/>
            <person name="Frankland J."/>
            <person name="French L."/>
            <person name="Garner P."/>
            <person name="Garnett J."/>
            <person name="Gilbert J.G.R."/>
            <person name="Gilson C.J."/>
            <person name="Ghori J."/>
            <person name="Grafham D.V."/>
            <person name="Gribble S.M."/>
            <person name="Griffiths C."/>
            <person name="Hall R.E."/>
            <person name="Hammond S."/>
            <person name="Harley J.L."/>
            <person name="Hart E.A."/>
            <person name="Heath P.D."/>
            <person name="Howden P.J."/>
            <person name="Huckle E.J."/>
            <person name="Hunt P.J."/>
            <person name="Hunt A.R."/>
            <person name="Johnson C."/>
            <person name="Johnson D."/>
            <person name="Kay M."/>
            <person name="Kimberley A.M."/>
            <person name="King A."/>
            <person name="Laird G.K."/>
            <person name="Langford C.J."/>
            <person name="Lawlor S."/>
            <person name="Leongamornlert D.A."/>
            <person name="Lloyd D.M."/>
            <person name="Lloyd C."/>
            <person name="Loveland J.E."/>
            <person name="Lovell J."/>
            <person name="Martin S."/>
            <person name="Mashreghi-Mohammadi M."/>
            <person name="McLaren S.J."/>
            <person name="McMurray A."/>
            <person name="Milne S."/>
            <person name="Moore M.J.F."/>
            <person name="Nickerson T."/>
            <person name="Palmer S.A."/>
            <person name="Pearce A.V."/>
            <person name="Peck A.I."/>
            <person name="Pelan S."/>
            <person name="Phillimore B."/>
            <person name="Porter K.M."/>
            <person name="Rice C.M."/>
            <person name="Searle S."/>
            <person name="Sehra H.K."/>
            <person name="Shownkeen R."/>
            <person name="Skuce C.D."/>
            <person name="Smith M."/>
            <person name="Steward C.A."/>
            <person name="Sycamore N."/>
            <person name="Tester J."/>
            <person name="Thomas D.W."/>
            <person name="Tracey A."/>
            <person name="Tromans A."/>
            <person name="Tubby B."/>
            <person name="Wall M."/>
            <person name="Wallis J.M."/>
            <person name="West A.P."/>
            <person name="Whitehead S.L."/>
            <person name="Willey D.L."/>
            <person name="Wilming L."/>
            <person name="Wray P.W."/>
            <person name="Wright M.W."/>
            <person name="Young L."/>
            <person name="Coulson A."/>
            <person name="Durbin R.M."/>
            <person name="Hubbard T."/>
            <person name="Sulston J.E."/>
            <person name="Beck S."/>
            <person name="Bentley D.R."/>
            <person name="Rogers J."/>
            <person name="Ross M.T."/>
        </authorList>
    </citation>
    <scope>NUCLEOTIDE SEQUENCE [LARGE SCALE GENOMIC DNA]</scope>
</reference>
<reference key="6">
    <citation type="submission" date="2005-07" db="EMBL/GenBank/DDBJ databases">
        <authorList>
            <person name="Mural R.J."/>
            <person name="Istrail S."/>
            <person name="Sutton G.G."/>
            <person name="Florea L."/>
            <person name="Halpern A.L."/>
            <person name="Mobarry C.M."/>
            <person name="Lippert R."/>
            <person name="Walenz B."/>
            <person name="Shatkay H."/>
            <person name="Dew I."/>
            <person name="Miller J.R."/>
            <person name="Flanigan M.J."/>
            <person name="Edwards N.J."/>
            <person name="Bolanos R."/>
            <person name="Fasulo D."/>
            <person name="Halldorsson B.V."/>
            <person name="Hannenhalli S."/>
            <person name="Turner R."/>
            <person name="Yooseph S."/>
            <person name="Lu F."/>
            <person name="Nusskern D.R."/>
            <person name="Shue B.C."/>
            <person name="Zheng X.H."/>
            <person name="Zhong F."/>
            <person name="Delcher A.L."/>
            <person name="Huson D.H."/>
            <person name="Kravitz S.A."/>
            <person name="Mouchard L."/>
            <person name="Reinert K."/>
            <person name="Remington K.A."/>
            <person name="Clark A.G."/>
            <person name="Waterman M.S."/>
            <person name="Eichler E.E."/>
            <person name="Adams M.D."/>
            <person name="Hunkapiller M.W."/>
            <person name="Myers E.W."/>
            <person name="Venter J.C."/>
        </authorList>
    </citation>
    <scope>NUCLEOTIDE SEQUENCE [LARGE SCALE GENOMIC DNA]</scope>
</reference>
<reference key="7">
    <citation type="journal article" date="2004" name="Genome Res.">
        <title>The status, quality, and expansion of the NIH full-length cDNA project: the Mammalian Gene Collection (MGC).</title>
        <authorList>
            <consortium name="The MGC Project Team"/>
        </authorList>
    </citation>
    <scope>NUCLEOTIDE SEQUENCE [LARGE SCALE MRNA]</scope>
    <source>
        <tissue>Brain</tissue>
    </source>
</reference>
<reference key="8">
    <citation type="journal article" date="1991" name="J. Biol. Chem.">
        <title>The product of the rap2 gene, member of the ras superfamily. Biochemical characterization and site-directed mutagenesis.</title>
        <authorList>
            <person name="Lerosey I."/>
            <person name="Chardin P."/>
            <person name="de Gunzburg J."/>
            <person name="Tavitian A."/>
        </authorList>
    </citation>
    <scope>CATALYTIC ACTIVITY</scope>
    <scope>GTP-BINDING</scope>
    <scope>MUTAGENESIS OF GLY-12; SER-17; THR-35 AND THR-145</scope>
</reference>
<reference key="9">
    <citation type="journal article" date="1993" name="Biochem. J.">
        <title>Prenyl group identification of rap2 proteins: a ras superfamily member other than ras that is farnesylated.</title>
        <authorList>
            <person name="Farrell F.X."/>
            <person name="Yamamoto K."/>
            <person name="Lapetina E.G."/>
        </authorList>
    </citation>
    <scope>ISOPRENYLATION AT CYS-180</scope>
    <scope>METHYLATION AT CYS-180</scope>
</reference>
<reference key="10">
    <citation type="journal article" date="1993" name="FEBS Lett.">
        <title>Localization of rap1 and rap2 proteins in the gelatinase-containing granules of human neutrophils.</title>
        <authorList>
            <person name="Mollinedo F."/>
            <person name="Perez-Sala D."/>
            <person name="Gajate C."/>
            <person name="Jimenez B."/>
            <person name="Rodriguez P."/>
            <person name="Lacal J.C."/>
        </authorList>
    </citation>
    <scope>SUBCELLULAR LOCATION</scope>
</reference>
<reference key="11">
    <citation type="journal article" date="1994" name="J. Cell Sci.">
        <title>Association of Rap1a and Rap1b proteins with late endocytic/phagocytic compartments and Rap2a with the Golgi complex.</title>
        <authorList>
            <person name="Pizon V."/>
            <person name="Desjardins M."/>
            <person name="Bucci C."/>
            <person name="Parton R.G."/>
            <person name="Zerial M."/>
        </authorList>
    </citation>
    <scope>SUBCELLULAR LOCATION</scope>
</reference>
<reference key="12">
    <citation type="journal article" date="1996" name="J. Biol. Chem.">
        <title>Ras, Rap, and Rac small GTP-binding proteins are targets for Clostridium sordellii lethal toxin glucosylation.</title>
        <authorList>
            <person name="Popoff M.R."/>
            <person name="Chaves-Olarte E."/>
            <person name="Lemichez E."/>
            <person name="von Eichel-Streiber C."/>
            <person name="Thelestam M."/>
            <person name="Chardin P."/>
            <person name="Cussac D."/>
            <person name="Antonny B."/>
            <person name="Chavrier P."/>
            <person name="Flatau G."/>
            <person name="Giry M."/>
            <person name="de Gunzburg J."/>
            <person name="Boquet P."/>
        </authorList>
    </citation>
    <scope>GLYCOSYLATION AT THR-35 (MICROBIAL INFECTION)</scope>
</reference>
<reference key="13">
    <citation type="journal article" date="1999" name="J. Cell. Biochem.">
        <title>Interaction of the low-molecular-weight GTP-binding protein rap2 with the platelet cytoskeleton is mediated by direct binding to the actin filaments.</title>
        <authorList>
            <person name="Torti M."/>
            <person name="Bertoni A."/>
            <person name="Canobbio I."/>
            <person name="Sinigaglia F."/>
            <person name="Lapetina E.G."/>
            <person name="Balduini C."/>
        </authorList>
    </citation>
    <scope>INTERACTION WITH ACTIN</scope>
</reference>
<reference key="14">
    <citation type="journal article" date="2000" name="J. Biol. Chem.">
        <title>Mechanism of regulation of the Epac family of cAMP-dependent RapGEFs.</title>
        <authorList>
            <person name="de Rooij J."/>
            <person name="Rehmann H."/>
            <person name="van Triest M."/>
            <person name="Cool R.H."/>
            <person name="Wittinghofer A."/>
            <person name="Bos J.L."/>
        </authorList>
    </citation>
    <scope>ACTIVATION BY RAPGEF3; RAPGEF4 AND RAPGEF5</scope>
</reference>
<reference key="15">
    <citation type="journal article" date="2002" name="Oncogene">
        <title>Differential roles of Ras and Rap1 in growth factor-dependent activation of phospholipase C epsilon.</title>
        <authorList>
            <person name="Song C."/>
            <person name="Satoh T."/>
            <person name="Edamatsu H."/>
            <person name="Wu D."/>
            <person name="Tadano M."/>
            <person name="Gao X."/>
            <person name="Kataoka T."/>
        </authorList>
    </citation>
    <scope>INTERACTION WITH PLCE1</scope>
</reference>
<reference key="16">
    <citation type="journal article" date="2004" name="J. Biol. Chem.">
        <title>Mitogen-activated protein kinase kinase kinase kinase 4 as a putative effector of Rap2 to activate the c-Jun N-terminal kinase.</title>
        <authorList>
            <person name="Machida N."/>
            <person name="Umikawa M."/>
            <person name="Takei K."/>
            <person name="Sakima N."/>
            <person name="Myagmar B.E."/>
            <person name="Taira K."/>
            <person name="Uezato H."/>
            <person name="Ogawa Y."/>
            <person name="Kariya K."/>
        </authorList>
    </citation>
    <scope>FUNCTION</scope>
    <scope>INTERACTION WITH MAP4K4</scope>
</reference>
<reference key="17">
    <citation type="journal article" date="2004" name="J. Biol. Chem.">
        <title>The Traf2- and Nck-interacting kinase as a putative effector of Rap2 to regulate actin cytoskeleton.</title>
        <authorList>
            <person name="Taira K."/>
            <person name="Umikawa M."/>
            <person name="Takei K."/>
            <person name="Myagmar B.-E."/>
            <person name="Shinzato M."/>
            <person name="Machida N."/>
            <person name="Uezato H."/>
            <person name="Nonaka S."/>
            <person name="Kariya K."/>
        </authorList>
    </citation>
    <scope>FUNCTION</scope>
    <scope>INTERACTION WITH TNIK</scope>
    <scope>MUTAGENESIS OF GLY-12; SER-17 AND PHE-39</scope>
</reference>
<reference key="18">
    <citation type="journal article" date="2005" name="Biochem. Biophys. Res. Commun.">
        <title>PARG1, a protein-tyrosine phosphatase-associated RhoGAP, as a putative Rap2 effector.</title>
        <authorList>
            <person name="Myagmar B.-E."/>
            <person name="Umikawa M."/>
            <person name="Asato T."/>
            <person name="Taira K."/>
            <person name="Oshiro M."/>
            <person name="Hino A."/>
            <person name="Takei K."/>
            <person name="Uezato H."/>
            <person name="Kariya K."/>
        </authorList>
    </citation>
    <scope>INTERACTION WITH ARHGAP29</scope>
</reference>
<reference key="19">
    <citation type="journal article" date="2006" name="Biochem. J.">
        <title>Biochemical characterization of RGS14: RGS14 activity towards G-protein alpha subunits is independent of its binding to Rap2A.</title>
        <authorList>
            <person name="Mittal V."/>
            <person name="Linder M.E."/>
        </authorList>
    </citation>
    <scope>FUNCTION</scope>
</reference>
<reference key="20">
    <citation type="journal article" date="2006" name="Biochim. Biophys. Acta">
        <title>Rap2, but not Rap1 GTPase is expressed in human red blood cells and is involved in vesiculation.</title>
        <authorList>
            <person name="Greco F."/>
            <person name="Ciana A."/>
            <person name="Pietra D."/>
            <person name="Balduini C."/>
            <person name="Minetti G."/>
            <person name="Torti M."/>
        </authorList>
    </citation>
    <scope>FUNCTION</scope>
</reference>
<reference key="21">
    <citation type="journal article" date="2007" name="Genomics">
        <title>Identification of three novel proteins (SGSM1, 2, 3) which modulate small G protein (RAP and RAB)-mediated signaling pathway.</title>
        <authorList>
            <person name="Yang H."/>
            <person name="Sasaki T."/>
            <person name="Minoshima S."/>
            <person name="Shimizu N."/>
        </authorList>
    </citation>
    <scope>INTERACTION WITH SGSM1; SGSM2 AND SGSM3</scope>
</reference>
<reference key="22">
    <citation type="journal article" date="2008" name="Biochem. Biophys. Res. Commun.">
        <title>MINK is a Rap2 effector for phosphorylation of the postsynaptic scaffold protein TANC1.</title>
        <authorList>
            <person name="Nonaka H."/>
            <person name="Takei K."/>
            <person name="Umikawa M."/>
            <person name="Oshiro M."/>
            <person name="Kuninaka K."/>
            <person name="Bayarjargal M."/>
            <person name="Asato T."/>
            <person name="Yamashiro Y."/>
            <person name="Uechi Y."/>
            <person name="Endo S."/>
            <person name="Suzuki T."/>
            <person name="Kariya K."/>
        </authorList>
    </citation>
    <scope>FUNCTION</scope>
    <scope>INTERACTION WITH MINK1</scope>
</reference>
<reference key="23">
    <citation type="journal article" date="2009" name="Biochem. Biophys. Res. Commun.">
        <title>Rap2 function requires palmitoylation and recycling endosome localization.</title>
        <authorList>
            <person name="Uechi Y."/>
            <person name="Bayarjargal M."/>
            <person name="Umikawa M."/>
            <person name="Oshiro M."/>
            <person name="Takei K."/>
            <person name="Yamashiro Y."/>
            <person name="Asato T."/>
            <person name="Endo S."/>
            <person name="Misaki R."/>
            <person name="Taguchi T."/>
            <person name="Kariya K."/>
        </authorList>
    </citation>
    <scope>SUBCELLULAR LOCATION</scope>
</reference>
<reference key="24">
    <citation type="journal article" date="2009" name="FEBS J.">
        <title>RasGEF1A and RasGEF1B are guanine nucleotide exchange factors that discriminate between Rap GTP-binding proteins and mediate Rap2-specific nucleotide exchange.</title>
        <authorList>
            <person name="Yaman E."/>
            <person name="Gasper R."/>
            <person name="Koerner C."/>
            <person name="Wittinghofer A."/>
            <person name="Tazebay U.H."/>
        </authorList>
    </citation>
    <scope>MUTAGENESIS OF PHE-39</scope>
    <scope>ACTIVATION BY RASGEF1A AND RASGEF1B</scope>
</reference>
<reference key="25">
    <citation type="journal article" date="2010" name="Neuron">
        <title>Regulation of Rap2A by the ubiquitin ligase Nedd4-1 controls neurite development.</title>
        <authorList>
            <person name="Kawabe H."/>
            <person name="Neeb A."/>
            <person name="Dimova K."/>
            <person name="Young S.M. Jr."/>
            <person name="Takeda M."/>
            <person name="Katsurabayashi S."/>
            <person name="Mitkovski M."/>
            <person name="Malakhova O.A."/>
            <person name="Zhang D.E."/>
            <person name="Umikawa M."/>
            <person name="Kariya K."/>
            <person name="Goebbels S."/>
            <person name="Nave K.A."/>
            <person name="Rosenmund C."/>
            <person name="Jahn O."/>
            <person name="Rhee J."/>
            <person name="Brose N."/>
        </authorList>
    </citation>
    <scope>FUNCTION</scope>
    <scope>INTERACTION WITH NEDD4 AND TNIK</scope>
    <scope>UBIQUITINATION BY NEDD4</scope>
    <scope>MUTAGENESIS OF LYS-5; PHE-39; LYS-94; LYS-148 AND LYS-150</scope>
</reference>
<reference key="26">
    <citation type="journal article" date="2011" name="BMC Syst. Biol.">
        <title>Initial characterization of the human central proteome.</title>
        <authorList>
            <person name="Burkard T.R."/>
            <person name="Planyavsky M."/>
            <person name="Kaupe I."/>
            <person name="Breitwieser F.P."/>
            <person name="Buerckstuemmer T."/>
            <person name="Bennett K.L."/>
            <person name="Superti-Furga G."/>
            <person name="Colinge J."/>
        </authorList>
    </citation>
    <scope>IDENTIFICATION BY MASS SPECTROMETRY [LARGE SCALE ANALYSIS]</scope>
</reference>
<reference key="27">
    <citation type="journal article" date="2012" name="J. Biol. Chem.">
        <title>Structural determinants of Clostridium difficile toxin A glucosyltransferase activity.</title>
        <authorList>
            <person name="Pruitt R.N."/>
            <person name="Chumbler N.M."/>
            <person name="Rutherford S.A."/>
            <person name="Farrow M.A."/>
            <person name="Friedman D.B."/>
            <person name="Spiller B."/>
            <person name="Lacy D.B."/>
        </authorList>
    </citation>
    <scope>GLYCOSYLATION AT THR-35 (MICROBIAL INFECTION)</scope>
</reference>
<reference key="28">
    <citation type="journal article" date="2013" name="PLoS ONE">
        <title>Coiled-coil domain containing protein 124 is a novel centrosome and midbody protein that interacts with the ras-guanine nucleotide exchange factor 1B and is involved in cytokinesis.</title>
        <authorList>
            <person name="Telkoparan P."/>
            <person name="Erkek S."/>
            <person name="Yaman E."/>
            <person name="Alotaibi H."/>
            <person name="Bayik D."/>
            <person name="Tazebay U.H."/>
        </authorList>
    </citation>
    <scope>SUBCELLULAR LOCATION</scope>
    <scope>ACTIVITY REGULATION BY RASGEF1B</scope>
</reference>
<reference key="29">
    <citation type="journal article" date="2022" name="J. Cell Biol.">
        <title>Ubiquitylation by Rab40b/Cul5 regulates Rap2 localization and activity during cell migration.</title>
        <authorList>
            <person name="Duncan E.D."/>
            <person name="Han K.J."/>
            <person name="Trout M.A."/>
            <person name="Prekeris R."/>
        </authorList>
    </citation>
    <scope>FUNCTION</scope>
    <scope>UBIQUITINATION</scope>
    <scope>SUBCELLULAR LOCATION</scope>
    <scope>MUTAGENESIS OF GLY-12; SER-17; LYS-117; LYS-148 AND LYS-150</scope>
</reference>
<reference key="30">
    <citation type="journal article" date="1997" name="EMBO J.">
        <title>Crystal structures of the small G protein Rap2A in complex with its substrate GTP, with GDP and with GTPgammaS.</title>
        <authorList>
            <person name="Cherfils J."/>
            <person name="Menetrey J."/>
            <person name="Le Bras G."/>
            <person name="Janoueix-Lerosey I."/>
            <person name="de Gunzburg J."/>
            <person name="Garel J.-R."/>
            <person name="Auzat I."/>
        </authorList>
    </citation>
    <scope>X-RAY CRYSTALLOGRAPHY (1.7 ANGSTROMS)</scope>
</reference>
<reference key="31">
    <citation type="journal article" date="1999" name="Proteins">
        <title>Structure of the small G protein Rap2 in a non-catalytic complex with GTP.</title>
        <authorList>
            <person name="Menetrey J."/>
            <person name="Cherfils J."/>
        </authorList>
    </citation>
    <scope>X-RAY CRYSTALLOGRAPHY (2.2 ANGSTROMS)</scope>
</reference>
<dbReference type="EC" id="3.6.5.2" evidence="12"/>
<dbReference type="EMBL" id="X12534">
    <property type="protein sequence ID" value="CAA31052.1"/>
    <property type="molecule type" value="mRNA"/>
</dbReference>
<dbReference type="EMBL" id="AF205602">
    <property type="protein sequence ID" value="AAN71845.1"/>
    <property type="molecule type" value="mRNA"/>
</dbReference>
<dbReference type="EMBL" id="AF493914">
    <property type="protein sequence ID" value="AAM12628.1"/>
    <property type="molecule type" value="mRNA"/>
</dbReference>
<dbReference type="EMBL" id="AK315139">
    <property type="protein sequence ID" value="BAG37588.1"/>
    <property type="molecule type" value="mRNA"/>
</dbReference>
<dbReference type="EMBL" id="AL442067">
    <property type="status" value="NOT_ANNOTATED_CDS"/>
    <property type="molecule type" value="Genomic_DNA"/>
</dbReference>
<dbReference type="EMBL" id="CH471085">
    <property type="protein sequence ID" value="EAX08974.1"/>
    <property type="molecule type" value="Genomic_DNA"/>
</dbReference>
<dbReference type="EMBL" id="BC041333">
    <property type="protein sequence ID" value="AAH41333.1"/>
    <property type="molecule type" value="mRNA"/>
</dbReference>
<dbReference type="EMBL" id="BC070031">
    <property type="protein sequence ID" value="AAH70031.1"/>
    <property type="molecule type" value="mRNA"/>
</dbReference>
<dbReference type="CCDS" id="CCDS9485.1"/>
<dbReference type="PIR" id="S03180">
    <property type="entry name" value="S03180"/>
</dbReference>
<dbReference type="RefSeq" id="NP_066361.1">
    <property type="nucleotide sequence ID" value="NM_021033.7"/>
</dbReference>
<dbReference type="PDB" id="1KAO">
    <property type="method" value="X-ray"/>
    <property type="resolution" value="1.70 A"/>
    <property type="chains" value="A=1-167"/>
</dbReference>
<dbReference type="PDB" id="2RAP">
    <property type="method" value="X-ray"/>
    <property type="resolution" value="2.60 A"/>
    <property type="chains" value="A=1-167"/>
</dbReference>
<dbReference type="PDB" id="3RAP">
    <property type="method" value="X-ray"/>
    <property type="resolution" value="2.20 A"/>
    <property type="chains" value="R/S=1-167"/>
</dbReference>
<dbReference type="PDBsum" id="1KAO"/>
<dbReference type="PDBsum" id="2RAP"/>
<dbReference type="PDBsum" id="3RAP"/>
<dbReference type="SMR" id="P10114"/>
<dbReference type="BioGRID" id="111846">
    <property type="interactions" value="93"/>
</dbReference>
<dbReference type="FunCoup" id="P10114">
    <property type="interactions" value="1144"/>
</dbReference>
<dbReference type="IntAct" id="P10114">
    <property type="interactions" value="52"/>
</dbReference>
<dbReference type="MINT" id="P10114"/>
<dbReference type="STRING" id="9606.ENSP00000245304"/>
<dbReference type="DrugBank" id="DB04315">
    <property type="generic name" value="Guanosine-5'-Diphosphate"/>
</dbReference>
<dbReference type="DrugBank" id="DB04137">
    <property type="generic name" value="Guanosine-5'-Triphosphate"/>
</dbReference>
<dbReference type="GlyCosmos" id="P10114">
    <property type="glycosylation" value="1 site, No reported glycans"/>
</dbReference>
<dbReference type="GlyGen" id="P10114">
    <property type="glycosylation" value="1 site"/>
</dbReference>
<dbReference type="iPTMnet" id="P10114"/>
<dbReference type="PhosphoSitePlus" id="P10114"/>
<dbReference type="SwissPalm" id="P10114"/>
<dbReference type="BioMuta" id="RAP2A"/>
<dbReference type="DMDM" id="131852"/>
<dbReference type="jPOST" id="P10114"/>
<dbReference type="MassIVE" id="P10114"/>
<dbReference type="PaxDb" id="9606-ENSP00000245304"/>
<dbReference type="PeptideAtlas" id="P10114"/>
<dbReference type="ProteomicsDB" id="52567"/>
<dbReference type="Pumba" id="P10114"/>
<dbReference type="Antibodypedia" id="10676">
    <property type="antibodies" value="140 antibodies from 27 providers"/>
</dbReference>
<dbReference type="DNASU" id="5911"/>
<dbReference type="Ensembl" id="ENST00000245304.5">
    <property type="protein sequence ID" value="ENSP00000245304.3"/>
    <property type="gene ID" value="ENSG00000125249.7"/>
</dbReference>
<dbReference type="GeneID" id="5911"/>
<dbReference type="KEGG" id="hsa:5911"/>
<dbReference type="MANE-Select" id="ENST00000245304.5">
    <property type="protein sequence ID" value="ENSP00000245304.3"/>
    <property type="RefSeq nucleotide sequence ID" value="NM_021033.7"/>
    <property type="RefSeq protein sequence ID" value="NP_066361.1"/>
</dbReference>
<dbReference type="UCSC" id="uc001vnd.4">
    <property type="organism name" value="human"/>
</dbReference>
<dbReference type="AGR" id="HGNC:9861"/>
<dbReference type="CTD" id="5911"/>
<dbReference type="DisGeNET" id="5911"/>
<dbReference type="GeneCards" id="RAP2A"/>
<dbReference type="HGNC" id="HGNC:9861">
    <property type="gene designation" value="RAP2A"/>
</dbReference>
<dbReference type="HPA" id="ENSG00000125249">
    <property type="expression patterns" value="Tissue enhanced (brain)"/>
</dbReference>
<dbReference type="MIM" id="179540">
    <property type="type" value="gene"/>
</dbReference>
<dbReference type="neXtProt" id="NX_P10114"/>
<dbReference type="OpenTargets" id="ENSG00000125249"/>
<dbReference type="PharmGKB" id="PA34222"/>
<dbReference type="VEuPathDB" id="HostDB:ENSG00000125249"/>
<dbReference type="eggNOG" id="KOG0395">
    <property type="taxonomic scope" value="Eukaryota"/>
</dbReference>
<dbReference type="GeneTree" id="ENSGT00940000160594"/>
<dbReference type="HOGENOM" id="CLU_041217_9_8_1"/>
<dbReference type="InParanoid" id="P10114"/>
<dbReference type="OMA" id="NCDFWEA"/>
<dbReference type="OrthoDB" id="5976022at2759"/>
<dbReference type="PAN-GO" id="P10114">
    <property type="GO annotations" value="6 GO annotations based on evolutionary models"/>
</dbReference>
<dbReference type="PhylomeDB" id="P10114"/>
<dbReference type="TreeFam" id="TF313014"/>
<dbReference type="PathwayCommons" id="P10114"/>
<dbReference type="SignaLink" id="P10114"/>
<dbReference type="BioGRID-ORCS" id="5911">
    <property type="hits" value="16 hits in 1154 CRISPR screens"/>
</dbReference>
<dbReference type="ChiTaRS" id="RAP2A">
    <property type="organism name" value="human"/>
</dbReference>
<dbReference type="EvolutionaryTrace" id="P10114"/>
<dbReference type="GeneWiki" id="RAP2A"/>
<dbReference type="GenomeRNAi" id="5911"/>
<dbReference type="Pharos" id="P10114">
    <property type="development level" value="Tbio"/>
</dbReference>
<dbReference type="PRO" id="PR:P10114"/>
<dbReference type="Proteomes" id="UP000005640">
    <property type="component" value="Chromosome 13"/>
</dbReference>
<dbReference type="RNAct" id="P10114">
    <property type="molecule type" value="protein"/>
</dbReference>
<dbReference type="Bgee" id="ENSG00000125249">
    <property type="expression patterns" value="Expressed in pons and 218 other cell types or tissues"/>
</dbReference>
<dbReference type="ExpressionAtlas" id="P10114">
    <property type="expression patterns" value="baseline and differential"/>
</dbReference>
<dbReference type="GO" id="GO:0005829">
    <property type="term" value="C:cytosol"/>
    <property type="evidence" value="ECO:0007669"/>
    <property type="project" value="Ensembl"/>
</dbReference>
<dbReference type="GO" id="GO:0030496">
    <property type="term" value="C:midbody"/>
    <property type="evidence" value="ECO:0007669"/>
    <property type="project" value="UniProtKB-SubCell"/>
</dbReference>
<dbReference type="GO" id="GO:0005886">
    <property type="term" value="C:plasma membrane"/>
    <property type="evidence" value="ECO:0000314"/>
    <property type="project" value="UniProtKB"/>
</dbReference>
<dbReference type="GO" id="GO:0055037">
    <property type="term" value="C:recycling endosome"/>
    <property type="evidence" value="ECO:0000314"/>
    <property type="project" value="UniProtKB"/>
</dbReference>
<dbReference type="GO" id="GO:0055038">
    <property type="term" value="C:recycling endosome membrane"/>
    <property type="evidence" value="ECO:0000314"/>
    <property type="project" value="UniProtKB"/>
</dbReference>
<dbReference type="GO" id="GO:0098685">
    <property type="term" value="C:Schaffer collateral - CA1 synapse"/>
    <property type="evidence" value="ECO:0000314"/>
    <property type="project" value="SynGO"/>
</dbReference>
<dbReference type="GO" id="GO:0097060">
    <property type="term" value="C:synaptic membrane"/>
    <property type="evidence" value="ECO:0007669"/>
    <property type="project" value="Ensembl"/>
</dbReference>
<dbReference type="GO" id="GO:0003925">
    <property type="term" value="F:G protein activity"/>
    <property type="evidence" value="ECO:0007669"/>
    <property type="project" value="UniProtKB-EC"/>
</dbReference>
<dbReference type="GO" id="GO:0019003">
    <property type="term" value="F:GDP binding"/>
    <property type="evidence" value="ECO:0000315"/>
    <property type="project" value="CAFA"/>
</dbReference>
<dbReference type="GO" id="GO:0005525">
    <property type="term" value="F:GTP binding"/>
    <property type="evidence" value="ECO:0000314"/>
    <property type="project" value="UniProtKB"/>
</dbReference>
<dbReference type="GO" id="GO:0003924">
    <property type="term" value="F:GTPase activity"/>
    <property type="evidence" value="ECO:0000314"/>
    <property type="project" value="UniProtKB"/>
</dbReference>
<dbReference type="GO" id="GO:0000287">
    <property type="term" value="F:magnesium ion binding"/>
    <property type="evidence" value="ECO:0000315"/>
    <property type="project" value="CAFA"/>
</dbReference>
<dbReference type="GO" id="GO:0030036">
    <property type="term" value="P:actin cytoskeleton organization"/>
    <property type="evidence" value="ECO:0000314"/>
    <property type="project" value="UniProtKB"/>
</dbReference>
<dbReference type="GO" id="GO:0071466">
    <property type="term" value="P:cellular response to xenobiotic stimulus"/>
    <property type="evidence" value="ECO:0000314"/>
    <property type="project" value="UniProtKB"/>
</dbReference>
<dbReference type="GO" id="GO:0045184">
    <property type="term" value="P:establishment of protein localization"/>
    <property type="evidence" value="ECO:0000314"/>
    <property type="project" value="MGI"/>
</dbReference>
<dbReference type="GO" id="GO:0030033">
    <property type="term" value="P:microvillus assembly"/>
    <property type="evidence" value="ECO:0000315"/>
    <property type="project" value="UniProtKB"/>
</dbReference>
<dbReference type="GO" id="GO:0030336">
    <property type="term" value="P:negative regulation of cell migration"/>
    <property type="evidence" value="ECO:0000318"/>
    <property type="project" value="GO_Central"/>
</dbReference>
<dbReference type="GO" id="GO:0031954">
    <property type="term" value="P:positive regulation of protein autophosphorylation"/>
    <property type="evidence" value="ECO:0000314"/>
    <property type="project" value="UniProtKB"/>
</dbReference>
<dbReference type="GO" id="GO:0001934">
    <property type="term" value="P:positive regulation of protein phosphorylation"/>
    <property type="evidence" value="ECO:0000315"/>
    <property type="project" value="UniProtKB"/>
</dbReference>
<dbReference type="GO" id="GO:0008104">
    <property type="term" value="P:protein localization"/>
    <property type="evidence" value="ECO:0000314"/>
    <property type="project" value="UniProtKB"/>
</dbReference>
<dbReference type="GO" id="GO:0072659">
    <property type="term" value="P:protein localization to plasma membrane"/>
    <property type="evidence" value="ECO:0000315"/>
    <property type="project" value="UniProtKB"/>
</dbReference>
<dbReference type="GO" id="GO:0032486">
    <property type="term" value="P:Rap protein signal transduction"/>
    <property type="evidence" value="ECO:0000250"/>
    <property type="project" value="UniProtKB"/>
</dbReference>
<dbReference type="GO" id="GO:0048814">
    <property type="term" value="P:regulation of dendrite morphogenesis"/>
    <property type="evidence" value="ECO:0000314"/>
    <property type="project" value="UniProtKB"/>
</dbReference>
<dbReference type="GO" id="GO:0046328">
    <property type="term" value="P:regulation of JNK cascade"/>
    <property type="evidence" value="ECO:0000314"/>
    <property type="project" value="UniProtKB"/>
</dbReference>
<dbReference type="GO" id="GO:0099072">
    <property type="term" value="P:regulation of postsynaptic membrane neurotransmitter receptor levels"/>
    <property type="evidence" value="ECO:0000314"/>
    <property type="project" value="SynGO"/>
</dbReference>
<dbReference type="GO" id="GO:0051963">
    <property type="term" value="P:regulation of synapse assembly"/>
    <property type="evidence" value="ECO:0000314"/>
    <property type="project" value="SynGO"/>
</dbReference>
<dbReference type="CDD" id="cd04176">
    <property type="entry name" value="Rap2"/>
    <property type="match status" value="1"/>
</dbReference>
<dbReference type="FunFam" id="3.40.50.300:FF:000189">
    <property type="entry name" value="Member of ras oncogene family"/>
    <property type="match status" value="1"/>
</dbReference>
<dbReference type="Gene3D" id="3.40.50.300">
    <property type="entry name" value="P-loop containing nucleotide triphosphate hydrolases"/>
    <property type="match status" value="1"/>
</dbReference>
<dbReference type="InterPro" id="IPR027417">
    <property type="entry name" value="P-loop_NTPase"/>
</dbReference>
<dbReference type="InterPro" id="IPR041840">
    <property type="entry name" value="Rap2"/>
</dbReference>
<dbReference type="InterPro" id="IPR005225">
    <property type="entry name" value="Small_GTP-bd"/>
</dbReference>
<dbReference type="InterPro" id="IPR001806">
    <property type="entry name" value="Small_GTPase"/>
</dbReference>
<dbReference type="InterPro" id="IPR020849">
    <property type="entry name" value="Small_GTPase_Ras-type"/>
</dbReference>
<dbReference type="NCBIfam" id="TIGR00231">
    <property type="entry name" value="small_GTP"/>
    <property type="match status" value="1"/>
</dbReference>
<dbReference type="PANTHER" id="PTHR24070">
    <property type="entry name" value="RAS, DI-RAS, AND RHEB FAMILY MEMBERS OF SMALL GTPASE SUPERFAMILY"/>
    <property type="match status" value="1"/>
</dbReference>
<dbReference type="Pfam" id="PF00071">
    <property type="entry name" value="Ras"/>
    <property type="match status" value="1"/>
</dbReference>
<dbReference type="PRINTS" id="PR00449">
    <property type="entry name" value="RASTRNSFRMNG"/>
</dbReference>
<dbReference type="SMART" id="SM00175">
    <property type="entry name" value="RAB"/>
    <property type="match status" value="1"/>
</dbReference>
<dbReference type="SMART" id="SM00176">
    <property type="entry name" value="RAN"/>
    <property type="match status" value="1"/>
</dbReference>
<dbReference type="SMART" id="SM00173">
    <property type="entry name" value="RAS"/>
    <property type="match status" value="1"/>
</dbReference>
<dbReference type="SMART" id="SM00174">
    <property type="entry name" value="RHO"/>
    <property type="match status" value="1"/>
</dbReference>
<dbReference type="SUPFAM" id="SSF52540">
    <property type="entry name" value="P-loop containing nucleoside triphosphate hydrolases"/>
    <property type="match status" value="1"/>
</dbReference>
<dbReference type="PROSITE" id="PS51421">
    <property type="entry name" value="RAS"/>
    <property type="match status" value="1"/>
</dbReference>
<accession>P10114</accession>
<accession>B2RCJ1</accession>
<accession>Q5JSC1</accession>
<accession>Q5JSC2</accession>
<evidence type="ECO:0000250" key="1"/>
<evidence type="ECO:0000250" key="2">
    <source>
        <dbReference type="UniProtKB" id="Q80ZJ1"/>
    </source>
</evidence>
<evidence type="ECO:0000269" key="3">
    <source>
    </source>
</evidence>
<evidence type="ECO:0000269" key="4">
    <source>
    </source>
</evidence>
<evidence type="ECO:0000269" key="5">
    <source>
    </source>
</evidence>
<evidence type="ECO:0000269" key="6">
    <source>
    </source>
</evidence>
<evidence type="ECO:0000269" key="7">
    <source>
    </source>
</evidence>
<evidence type="ECO:0000269" key="8">
    <source>
    </source>
</evidence>
<evidence type="ECO:0000269" key="9">
    <source>
    </source>
</evidence>
<evidence type="ECO:0000269" key="10">
    <source>
    </source>
</evidence>
<evidence type="ECO:0000269" key="11">
    <source>
    </source>
</evidence>
<evidence type="ECO:0000269" key="12">
    <source>
    </source>
</evidence>
<evidence type="ECO:0000269" key="13">
    <source>
    </source>
</evidence>
<evidence type="ECO:0000269" key="14">
    <source>
    </source>
</evidence>
<evidence type="ECO:0000269" key="15">
    <source>
    </source>
</evidence>
<evidence type="ECO:0000269" key="16">
    <source>
    </source>
</evidence>
<evidence type="ECO:0000269" key="17">
    <source>
    </source>
</evidence>
<evidence type="ECO:0000269" key="18">
    <source>
    </source>
</evidence>
<evidence type="ECO:0000269" key="19">
    <source>
    </source>
</evidence>
<evidence type="ECO:0000269" key="20">
    <source>
    </source>
</evidence>
<evidence type="ECO:0000269" key="21">
    <source>
    </source>
</evidence>
<evidence type="ECO:0000305" key="22"/>
<evidence type="ECO:0000305" key="23">
    <source>
    </source>
</evidence>
<evidence type="ECO:0000312" key="24">
    <source>
        <dbReference type="HGNC" id="HGNC:9861"/>
    </source>
</evidence>
<evidence type="ECO:0007829" key="25">
    <source>
        <dbReference type="PDB" id="1KAO"/>
    </source>
</evidence>
<gene>
    <name evidence="24" type="primary">RAP2A</name>
</gene>
<organism>
    <name type="scientific">Homo sapiens</name>
    <name type="common">Human</name>
    <dbReference type="NCBI Taxonomy" id="9606"/>
    <lineage>
        <taxon>Eukaryota</taxon>
        <taxon>Metazoa</taxon>
        <taxon>Chordata</taxon>
        <taxon>Craniata</taxon>
        <taxon>Vertebrata</taxon>
        <taxon>Euteleostomi</taxon>
        <taxon>Mammalia</taxon>
        <taxon>Eutheria</taxon>
        <taxon>Euarchontoglires</taxon>
        <taxon>Primates</taxon>
        <taxon>Haplorrhini</taxon>
        <taxon>Catarrhini</taxon>
        <taxon>Hominidae</taxon>
        <taxon>Homo</taxon>
    </lineage>
</organism>
<sequence length="183" mass="20615">MREYKVVVLGSGGVGKSALTVQFVTGTFIEKYDPTIEDFYRKEIEVDSSPSVLEILDTAGTEQFASMRDLYIKNGQGFILVYSLVNQQSFQDIKPMRDQIIRVKRYEKVPVILVGNKVDLESEREVSSSEGRALAEEWGCPFMETSAKSKTMVDELFAEIVRQMNYAAQPDKDDPCCSACNIQ</sequence>
<keyword id="KW-0002">3D-structure</keyword>
<keyword id="KW-1003">Cell membrane</keyword>
<keyword id="KW-0966">Cell projection</keyword>
<keyword id="KW-0967">Endosome</keyword>
<keyword id="KW-0325">Glycoprotein</keyword>
<keyword id="KW-0333">Golgi apparatus</keyword>
<keyword id="KW-0342">GTP-binding</keyword>
<keyword id="KW-0378">Hydrolase</keyword>
<keyword id="KW-0449">Lipoprotein</keyword>
<keyword id="KW-0458">Lysosome</keyword>
<keyword id="KW-0472">Membrane</keyword>
<keyword id="KW-0488">Methylation</keyword>
<keyword id="KW-0547">Nucleotide-binding</keyword>
<keyword id="KW-0564">Palmitate</keyword>
<keyword id="KW-0636">Prenylation</keyword>
<keyword id="KW-1267">Proteomics identification</keyword>
<keyword id="KW-1185">Reference proteome</keyword>
<keyword id="KW-0832">Ubl conjugation</keyword>
<proteinExistence type="evidence at protein level"/>
<name>RAP2A_HUMAN</name>
<protein>
    <recommendedName>
        <fullName>Ras-related protein Rap-2a</fullName>
        <ecNumber evidence="12">3.6.5.2</ecNumber>
    </recommendedName>
    <alternativeName>
        <fullName>RbBP-30</fullName>
    </alternativeName>
</protein>
<comment type="function">
    <text evidence="5 6 8 9 11 14 17">Small GTP-binding protein which cycles between a GDP-bound inactive and a GTP-bound active form (PubMed:14966141, PubMed:15342639, PubMed:16246175, PubMed:16540189, PubMed:18930710, PubMed:20159449, PubMed:35293963). In its active form interacts with and regulates several effectors including MAP4K4, MINK1 and TNIK (PubMed:14966141, PubMed:15342639, PubMed:18930710, PubMed:20159449). Part of a signaling complex composed of NEDD4, RAP2A and TNIK which regulates neuronal dendrite extension and arborization during development (PubMed:20159449). More generally, it is part of several signaling cascades and regulates cytoskeletal rearrangements, cell migration, cell adhesion and cell spreading (PubMed:14966141, PubMed:15342639, PubMed:16246175, PubMed:16540189, PubMed:18930710, PubMed:20159449, PubMed:35293963).</text>
</comment>
<comment type="catalytic activity">
    <reaction evidence="12">
        <text>GTP + H2O = GDP + phosphate + H(+)</text>
        <dbReference type="Rhea" id="RHEA:19669"/>
        <dbReference type="ChEBI" id="CHEBI:15377"/>
        <dbReference type="ChEBI" id="CHEBI:15378"/>
        <dbReference type="ChEBI" id="CHEBI:37565"/>
        <dbReference type="ChEBI" id="CHEBI:43474"/>
        <dbReference type="ChEBI" id="CHEBI:58189"/>
        <dbReference type="EC" id="3.6.5.2"/>
    </reaction>
</comment>
<comment type="activity regulation">
    <text evidence="16">Activated by the guanine nucleotide-exchange factors RAPGEF3 and RAPGEF4 in a cAMP-dependent manner. Nucleotide exchange is also specifically stimulated by RAPGEF5, RASGEF1A and RASGEF1B.</text>
</comment>
<comment type="subunit">
    <text evidence="2 3 4 5 6 7 10 11 14">Interacts (GTP-bound form) with RUNDC3A. Interacts with RGS14; the interaction is GTP-dependent (By similarity). Interacts with PLCE1. Interacts with ARHGAP29, SGSM1, SGSM2 and SGSM3. Interacts (GTP-bound form preferentially) with TNIK (via the CNH domain); the interaction is direct and recruits RAP2A to the E3 ubiquitin ligase NEDD4. Interacts with MINK1. Interacts (GTP-bound form preferentially) with MAP4K4. Interacts with cytoskeletal actin.</text>
</comment>
<comment type="interaction">
    <interactant intactId="EBI-602366">
        <id>P10114</id>
    </interactant>
    <interactant intactId="EBI-3907816">
        <id>P54852</id>
        <label>EMP3</label>
    </interactant>
    <organismsDiffer>false</organismsDiffer>
    <experiments>3</experiments>
</comment>
<comment type="interaction">
    <interactant intactId="EBI-602366">
        <id>P10114</id>
    </interactant>
    <interactant intactId="EBI-2133481">
        <id>Q8N4C8</id>
        <label>MINK1</label>
    </interactant>
    <organismsDiffer>false</organismsDiffer>
    <experiments>3</experiments>
</comment>
<comment type="interaction">
    <interactant intactId="EBI-602366">
        <id>P10114</id>
    </interactant>
    <interactant intactId="EBI-23868346">
        <id>Q9NZL6-2</id>
        <label>RGL1</label>
    </interactant>
    <organismsDiffer>false</organismsDiffer>
    <experiments>3</experiments>
</comment>
<comment type="interaction">
    <interactant intactId="EBI-602366">
        <id>P10114</id>
    </interactant>
    <interactant intactId="EBI-11957366">
        <id>Q59EK9-3</id>
        <label>RUNDC3A</label>
    </interactant>
    <organismsDiffer>false</organismsDiffer>
    <experiments>3</experiments>
</comment>
<comment type="subcellular location">
    <subcellularLocation>
        <location evidence="16">Midbody</location>
    </subcellularLocation>
    <subcellularLocation>
        <location evidence="17">Cell projection</location>
        <location evidence="17">Lamellipodium membrane</location>
    </subcellularLocation>
    <subcellularLocation>
        <location evidence="17">Golgi apparatus</location>
    </subcellularLocation>
    <subcellularLocation>
        <location>Recycling endosome membrane</location>
        <topology>Lipid-anchor</topology>
        <orientation evidence="17">Cytoplasmic side</orientation>
    </subcellularLocation>
    <subcellularLocation>
        <location evidence="17">Lysosome</location>
    </subcellularLocation>
    <text evidence="16 17 18 19">Localized to the Golgi (PubMed:35293963, PubMed:7962206). May also localize to the gelatinase-containing granules of neutrophils (PubMed:8391995). Colocalized with RASGEF1B to midbody at telophase (PubMed:23894443). Localized predominantly to the plasma membrane, where it is enriched at lamellipodia ruffles (PubMed:35293963). Cycles between the lamellipodia plasma membrane and endosomes when ubiquitinated by the ECS(RAB40B) complex (PubMed:35293963). Without the ubiquitin signal, sorted to lysosomes for degradation (PubMed:35293963).</text>
</comment>
<comment type="domain">
    <text evidence="1">The effector domain mediates the interaction with RUNDC3A.</text>
</comment>
<comment type="PTM">
    <text evidence="14 17">Ubiquitinated; undergoes 'Lys-63' monoubiquitination and diubiquitination by NEDD4. Multiple lysine residues are probably modified. Ubiquitination requires TNIK, prevents interaction with effectors and inactivates RAP2A (PubMed:20159449). Ubiquitination by the ECS(RAB40B) complex leads to RAP2A localization to lamellipodia plasma membrane, activation, and regulation of sorting at early endosomes for recycling to the lamellipodia plasma membrane (PubMed:35293963).</text>
</comment>
<comment type="PTM">
    <text evidence="2">Palmitoylated. Palmitoylation is required for association with recycling endosome membranes and activation of TNIK.</text>
</comment>
<comment type="PTM">
    <text evidence="15 21">(Microbial infection) Glucosylated at Thr-35 by C.difficile toxin TcdA in the colonic epithelium, and by P.sordellii toxin TcsL in the vascular endothelium.</text>
</comment>
<comment type="similarity">
    <text evidence="22">Belongs to the small GTPase superfamily. Ras family.</text>
</comment>
<comment type="online information" name="Atlas of Genetics and Cytogenetics in Oncology and Haematology">
    <link uri="https://atlasgeneticsoncology.org/gene/274/RAP2A"/>
</comment>